<name>PYRG_ANAMF</name>
<feature type="chain" id="PRO_1000164924" description="CTP synthase">
    <location>
        <begin position="1"/>
        <end position="560"/>
    </location>
</feature>
<feature type="domain" description="Glutamine amidotransferase type-1" evidence="1">
    <location>
        <begin position="297"/>
        <end position="539"/>
    </location>
</feature>
<feature type="region of interest" description="Amidoligase domain" evidence="1">
    <location>
        <begin position="1"/>
        <end position="272"/>
    </location>
</feature>
<feature type="active site" description="Nucleophile; for glutamine hydrolysis" evidence="1">
    <location>
        <position position="383"/>
    </location>
</feature>
<feature type="active site" evidence="1">
    <location>
        <position position="512"/>
    </location>
</feature>
<feature type="active site" evidence="1">
    <location>
        <position position="514"/>
    </location>
</feature>
<feature type="binding site" evidence="1">
    <location>
        <position position="20"/>
    </location>
    <ligand>
        <name>CTP</name>
        <dbReference type="ChEBI" id="CHEBI:37563"/>
        <note>allosteric inhibitor</note>
    </ligand>
</feature>
<feature type="binding site" evidence="1">
    <location>
        <position position="20"/>
    </location>
    <ligand>
        <name>UTP</name>
        <dbReference type="ChEBI" id="CHEBI:46398"/>
    </ligand>
</feature>
<feature type="binding site" evidence="1">
    <location>
        <begin position="21"/>
        <end position="26"/>
    </location>
    <ligand>
        <name>ATP</name>
        <dbReference type="ChEBI" id="CHEBI:30616"/>
    </ligand>
</feature>
<feature type="binding site" evidence="1">
    <location>
        <position position="78"/>
    </location>
    <ligand>
        <name>ATP</name>
        <dbReference type="ChEBI" id="CHEBI:30616"/>
    </ligand>
</feature>
<feature type="binding site" evidence="1">
    <location>
        <position position="78"/>
    </location>
    <ligand>
        <name>Mg(2+)</name>
        <dbReference type="ChEBI" id="CHEBI:18420"/>
    </ligand>
</feature>
<feature type="binding site" evidence="1">
    <location>
        <position position="146"/>
    </location>
    <ligand>
        <name>Mg(2+)</name>
        <dbReference type="ChEBI" id="CHEBI:18420"/>
    </ligand>
</feature>
<feature type="binding site" evidence="1">
    <location>
        <begin position="153"/>
        <end position="155"/>
    </location>
    <ligand>
        <name>CTP</name>
        <dbReference type="ChEBI" id="CHEBI:37563"/>
        <note>allosteric inhibitor</note>
    </ligand>
</feature>
<feature type="binding site" evidence="1">
    <location>
        <begin position="193"/>
        <end position="198"/>
    </location>
    <ligand>
        <name>CTP</name>
        <dbReference type="ChEBI" id="CHEBI:37563"/>
        <note>allosteric inhibitor</note>
    </ligand>
</feature>
<feature type="binding site" evidence="1">
    <location>
        <begin position="193"/>
        <end position="198"/>
    </location>
    <ligand>
        <name>UTP</name>
        <dbReference type="ChEBI" id="CHEBI:46398"/>
    </ligand>
</feature>
<feature type="binding site" evidence="1">
    <location>
        <position position="229"/>
    </location>
    <ligand>
        <name>CTP</name>
        <dbReference type="ChEBI" id="CHEBI:37563"/>
        <note>allosteric inhibitor</note>
    </ligand>
</feature>
<feature type="binding site" evidence="1">
    <location>
        <position position="229"/>
    </location>
    <ligand>
        <name>UTP</name>
        <dbReference type="ChEBI" id="CHEBI:46398"/>
    </ligand>
</feature>
<feature type="binding site" evidence="1">
    <location>
        <position position="356"/>
    </location>
    <ligand>
        <name>L-glutamine</name>
        <dbReference type="ChEBI" id="CHEBI:58359"/>
    </ligand>
</feature>
<feature type="binding site" evidence="1">
    <location>
        <begin position="384"/>
        <end position="387"/>
    </location>
    <ligand>
        <name>L-glutamine</name>
        <dbReference type="ChEBI" id="CHEBI:58359"/>
    </ligand>
</feature>
<feature type="binding site" evidence="1">
    <location>
        <position position="407"/>
    </location>
    <ligand>
        <name>L-glutamine</name>
        <dbReference type="ChEBI" id="CHEBI:58359"/>
    </ligand>
</feature>
<feature type="binding site" evidence="1">
    <location>
        <position position="467"/>
    </location>
    <ligand>
        <name>L-glutamine</name>
        <dbReference type="ChEBI" id="CHEBI:58359"/>
    </ligand>
</feature>
<evidence type="ECO:0000255" key="1">
    <source>
        <dbReference type="HAMAP-Rule" id="MF_01227"/>
    </source>
</evidence>
<reference key="1">
    <citation type="journal article" date="2009" name="BMC Genomics">
        <title>Conservation in the face of diversity: multistrain analysis of an intracellular bacterium.</title>
        <authorList>
            <person name="Dark M.J."/>
            <person name="Herndon D.R."/>
            <person name="Kappmeyer L.S."/>
            <person name="Gonzales M.P."/>
            <person name="Nordeen E."/>
            <person name="Palmer G.H."/>
            <person name="Knowles D.P. Jr."/>
            <person name="Brayton K.A."/>
        </authorList>
    </citation>
    <scope>NUCLEOTIDE SEQUENCE [LARGE SCALE GENOMIC DNA]</scope>
    <source>
        <strain>Florida</strain>
    </source>
</reference>
<organism>
    <name type="scientific">Anaplasma marginale (strain Florida)</name>
    <dbReference type="NCBI Taxonomy" id="320483"/>
    <lineage>
        <taxon>Bacteria</taxon>
        <taxon>Pseudomonadati</taxon>
        <taxon>Pseudomonadota</taxon>
        <taxon>Alphaproteobacteria</taxon>
        <taxon>Rickettsiales</taxon>
        <taxon>Anaplasmataceae</taxon>
        <taxon>Anaplasma</taxon>
    </lineage>
</organism>
<keyword id="KW-0067">ATP-binding</keyword>
<keyword id="KW-0315">Glutamine amidotransferase</keyword>
<keyword id="KW-0436">Ligase</keyword>
<keyword id="KW-0460">Magnesium</keyword>
<keyword id="KW-0479">Metal-binding</keyword>
<keyword id="KW-0547">Nucleotide-binding</keyword>
<keyword id="KW-0665">Pyrimidine biosynthesis</keyword>
<keyword id="KW-1185">Reference proteome</keyword>
<comment type="function">
    <text evidence="1">Catalyzes the ATP-dependent amination of UTP to CTP with either L-glutamine or ammonia as the source of nitrogen. Regulates intracellular CTP levels through interactions with the four ribonucleotide triphosphates.</text>
</comment>
<comment type="catalytic activity">
    <reaction evidence="1">
        <text>UTP + L-glutamine + ATP + H2O = CTP + L-glutamate + ADP + phosphate + 2 H(+)</text>
        <dbReference type="Rhea" id="RHEA:26426"/>
        <dbReference type="ChEBI" id="CHEBI:15377"/>
        <dbReference type="ChEBI" id="CHEBI:15378"/>
        <dbReference type="ChEBI" id="CHEBI:29985"/>
        <dbReference type="ChEBI" id="CHEBI:30616"/>
        <dbReference type="ChEBI" id="CHEBI:37563"/>
        <dbReference type="ChEBI" id="CHEBI:43474"/>
        <dbReference type="ChEBI" id="CHEBI:46398"/>
        <dbReference type="ChEBI" id="CHEBI:58359"/>
        <dbReference type="ChEBI" id="CHEBI:456216"/>
        <dbReference type="EC" id="6.3.4.2"/>
    </reaction>
</comment>
<comment type="catalytic activity">
    <reaction evidence="1">
        <text>L-glutamine + H2O = L-glutamate + NH4(+)</text>
        <dbReference type="Rhea" id="RHEA:15889"/>
        <dbReference type="ChEBI" id="CHEBI:15377"/>
        <dbReference type="ChEBI" id="CHEBI:28938"/>
        <dbReference type="ChEBI" id="CHEBI:29985"/>
        <dbReference type="ChEBI" id="CHEBI:58359"/>
    </reaction>
</comment>
<comment type="catalytic activity">
    <reaction evidence="1">
        <text>UTP + NH4(+) + ATP = CTP + ADP + phosphate + 2 H(+)</text>
        <dbReference type="Rhea" id="RHEA:16597"/>
        <dbReference type="ChEBI" id="CHEBI:15378"/>
        <dbReference type="ChEBI" id="CHEBI:28938"/>
        <dbReference type="ChEBI" id="CHEBI:30616"/>
        <dbReference type="ChEBI" id="CHEBI:37563"/>
        <dbReference type="ChEBI" id="CHEBI:43474"/>
        <dbReference type="ChEBI" id="CHEBI:46398"/>
        <dbReference type="ChEBI" id="CHEBI:456216"/>
    </reaction>
</comment>
<comment type="activity regulation">
    <text evidence="1">Allosterically activated by GTP, when glutamine is the substrate; GTP has no effect on the reaction when ammonia is the substrate. The allosteric effector GTP functions by stabilizing the protein conformation that binds the tetrahedral intermediate(s) formed during glutamine hydrolysis. Inhibited by the product CTP, via allosteric rather than competitive inhibition.</text>
</comment>
<comment type="pathway">
    <text evidence="1">Pyrimidine metabolism; CTP biosynthesis via de novo pathway; CTP from UDP: step 2/2.</text>
</comment>
<comment type="subunit">
    <text evidence="1">Homotetramer.</text>
</comment>
<comment type="miscellaneous">
    <text evidence="1">CTPSs have evolved a hybrid strategy for distinguishing between UTP and CTP. The overlapping regions of the product feedback inhibitory and substrate sites recognize a common feature in both compounds, the triphosphate moiety. To differentiate isosteric substrate and product pyrimidine rings, an additional pocket far from the expected kinase/ligase catalytic site, specifically recognizes the cytosine and ribose portions of the product inhibitor.</text>
</comment>
<comment type="similarity">
    <text evidence="1">Belongs to the CTP synthase family.</text>
</comment>
<protein>
    <recommendedName>
        <fullName evidence="1">CTP synthase</fullName>
        <ecNumber evidence="1">6.3.4.2</ecNumber>
    </recommendedName>
    <alternativeName>
        <fullName evidence="1">Cytidine 5'-triphosphate synthase</fullName>
    </alternativeName>
    <alternativeName>
        <fullName evidence="1">Cytidine triphosphate synthetase</fullName>
        <shortName evidence="1">CTP synthetase</shortName>
        <shortName evidence="1">CTPS</shortName>
    </alternativeName>
    <alternativeName>
        <fullName evidence="1">UTP--ammonia ligase</fullName>
    </alternativeName>
</protein>
<sequence>MSIGDVCSARFIFVTGGVVSSLGKGLAAASIGALLQARGFRVRLRKLDPYLNVDPGTMSPAQHGEVFVTDDGGETDLDLGNYERFTGVNTTKEDNITAGRIYQQLLAKERRGDYLGHTVQVIPHVTDLIISFILSNDDGADFIICEIGGTVGDIESQPFLESIRQVSYRLSKNFTIFVHLTLVPCVGSAGELKTKPTQHSVKELSSLGIQPDIILYRSAEPLPQYQSAKIANFCNVSADNVIPALDVESMYKLPVMYHAHKLDTQILSHFGMGAPEPDLTKWANVLTMVNNARNVVTIAIIGKYTKFLDAYTSLTEALDHAGMHSGIKIQVKWVDSRLPVRESDLHDVDGVLIPGGFGDDGVDGKVLAIGYARANGIPMLGICMGMQLAAIEFALNVAKLEDANSTEFNQACKNPIVVELPWLQKGEGEYLLGGSMRLGSCTYRLSADSRVASVYGSTVINERCRHRYCINPQYKNVLEEHGLSFTGMSDSHGLVEVLELQSHPWFIGVQFHPEFKSSPFAPHPLFTSFVQNVLQIKQRGFMHKSVSAAAILVPGSSVVS</sequence>
<gene>
    <name evidence="1" type="primary">pyrG</name>
    <name type="ordered locus">AMF_015</name>
</gene>
<dbReference type="EC" id="6.3.4.2" evidence="1"/>
<dbReference type="EMBL" id="CP001079">
    <property type="protein sequence ID" value="ACM48913.1"/>
    <property type="molecule type" value="Genomic_DNA"/>
</dbReference>
<dbReference type="RefSeq" id="WP_010266777.1">
    <property type="nucleotide sequence ID" value="NZ_AFMS01000010.1"/>
</dbReference>
<dbReference type="SMR" id="B9KHF1"/>
<dbReference type="STRING" id="320483.AMF_015"/>
<dbReference type="MEROPS" id="C26.964"/>
<dbReference type="GeneID" id="7398834"/>
<dbReference type="KEGG" id="amf:AMF_015"/>
<dbReference type="PATRIC" id="fig|320483.3.peg.15"/>
<dbReference type="eggNOG" id="COG0504">
    <property type="taxonomic scope" value="Bacteria"/>
</dbReference>
<dbReference type="HOGENOM" id="CLU_011675_5_0_5"/>
<dbReference type="UniPathway" id="UPA00159">
    <property type="reaction ID" value="UER00277"/>
</dbReference>
<dbReference type="Proteomes" id="UP000007307">
    <property type="component" value="Chromosome"/>
</dbReference>
<dbReference type="GO" id="GO:0005829">
    <property type="term" value="C:cytosol"/>
    <property type="evidence" value="ECO:0007669"/>
    <property type="project" value="TreeGrafter"/>
</dbReference>
<dbReference type="GO" id="GO:0005524">
    <property type="term" value="F:ATP binding"/>
    <property type="evidence" value="ECO:0007669"/>
    <property type="project" value="UniProtKB-KW"/>
</dbReference>
<dbReference type="GO" id="GO:0003883">
    <property type="term" value="F:CTP synthase activity"/>
    <property type="evidence" value="ECO:0007669"/>
    <property type="project" value="UniProtKB-UniRule"/>
</dbReference>
<dbReference type="GO" id="GO:0004359">
    <property type="term" value="F:glutaminase activity"/>
    <property type="evidence" value="ECO:0007669"/>
    <property type="project" value="RHEA"/>
</dbReference>
<dbReference type="GO" id="GO:0042802">
    <property type="term" value="F:identical protein binding"/>
    <property type="evidence" value="ECO:0007669"/>
    <property type="project" value="TreeGrafter"/>
</dbReference>
<dbReference type="GO" id="GO:0046872">
    <property type="term" value="F:metal ion binding"/>
    <property type="evidence" value="ECO:0007669"/>
    <property type="project" value="UniProtKB-KW"/>
</dbReference>
<dbReference type="GO" id="GO:0044210">
    <property type="term" value="P:'de novo' CTP biosynthetic process"/>
    <property type="evidence" value="ECO:0007669"/>
    <property type="project" value="UniProtKB-UniRule"/>
</dbReference>
<dbReference type="GO" id="GO:0019856">
    <property type="term" value="P:pyrimidine nucleobase biosynthetic process"/>
    <property type="evidence" value="ECO:0007669"/>
    <property type="project" value="TreeGrafter"/>
</dbReference>
<dbReference type="CDD" id="cd03113">
    <property type="entry name" value="CTPS_N"/>
    <property type="match status" value="1"/>
</dbReference>
<dbReference type="CDD" id="cd01746">
    <property type="entry name" value="GATase1_CTP_Synthase"/>
    <property type="match status" value="1"/>
</dbReference>
<dbReference type="FunFam" id="3.40.50.300:FF:000009">
    <property type="entry name" value="CTP synthase"/>
    <property type="match status" value="1"/>
</dbReference>
<dbReference type="FunFam" id="3.40.50.880:FF:000002">
    <property type="entry name" value="CTP synthase"/>
    <property type="match status" value="1"/>
</dbReference>
<dbReference type="Gene3D" id="3.40.50.880">
    <property type="match status" value="1"/>
</dbReference>
<dbReference type="Gene3D" id="3.40.50.300">
    <property type="entry name" value="P-loop containing nucleotide triphosphate hydrolases"/>
    <property type="match status" value="1"/>
</dbReference>
<dbReference type="HAMAP" id="MF_01227">
    <property type="entry name" value="PyrG"/>
    <property type="match status" value="1"/>
</dbReference>
<dbReference type="InterPro" id="IPR029062">
    <property type="entry name" value="Class_I_gatase-like"/>
</dbReference>
<dbReference type="InterPro" id="IPR004468">
    <property type="entry name" value="CTP_synthase"/>
</dbReference>
<dbReference type="InterPro" id="IPR017456">
    <property type="entry name" value="CTP_synthase_N"/>
</dbReference>
<dbReference type="InterPro" id="IPR017926">
    <property type="entry name" value="GATASE"/>
</dbReference>
<dbReference type="InterPro" id="IPR033828">
    <property type="entry name" value="GATase1_CTP_Synthase"/>
</dbReference>
<dbReference type="InterPro" id="IPR027417">
    <property type="entry name" value="P-loop_NTPase"/>
</dbReference>
<dbReference type="NCBIfam" id="NF003792">
    <property type="entry name" value="PRK05380.1"/>
    <property type="match status" value="1"/>
</dbReference>
<dbReference type="NCBIfam" id="TIGR00337">
    <property type="entry name" value="PyrG"/>
    <property type="match status" value="1"/>
</dbReference>
<dbReference type="PANTHER" id="PTHR11550">
    <property type="entry name" value="CTP SYNTHASE"/>
    <property type="match status" value="1"/>
</dbReference>
<dbReference type="PANTHER" id="PTHR11550:SF0">
    <property type="entry name" value="CTP SYNTHASE-RELATED"/>
    <property type="match status" value="1"/>
</dbReference>
<dbReference type="Pfam" id="PF06418">
    <property type="entry name" value="CTP_synth_N"/>
    <property type="match status" value="1"/>
</dbReference>
<dbReference type="Pfam" id="PF00117">
    <property type="entry name" value="GATase"/>
    <property type="match status" value="1"/>
</dbReference>
<dbReference type="SUPFAM" id="SSF52317">
    <property type="entry name" value="Class I glutamine amidotransferase-like"/>
    <property type="match status" value="1"/>
</dbReference>
<dbReference type="SUPFAM" id="SSF52540">
    <property type="entry name" value="P-loop containing nucleoside triphosphate hydrolases"/>
    <property type="match status" value="1"/>
</dbReference>
<dbReference type="PROSITE" id="PS51273">
    <property type="entry name" value="GATASE_TYPE_1"/>
    <property type="match status" value="1"/>
</dbReference>
<accession>B9KHF1</accession>
<proteinExistence type="inferred from homology"/>